<sequence>MTTSAQSVLELLPAVDIVDGQAVRLLQGEAGSETSYGTPLEAALNWQNDGAEWVHMVDLDAAFGRGNNAALISDVVSQLNVKVELSGGLRDDESLERALELGVARVNLGTAALENPEWTRKAIDRFGDKIAVGLDVRGTTLAGRGWTKEGGDLWEVLARLEDAGCARYVVTDVTKDGTLQGPNVELLRQMVEKTGKPVVASGGISSLEDLRVLRELVPLGVEGAIVGKALYAGAFTLPEALDVAGRR</sequence>
<dbReference type="EC" id="5.3.1.16" evidence="1"/>
<dbReference type="EMBL" id="CP000474">
    <property type="protein sequence ID" value="ABM09313.1"/>
    <property type="molecule type" value="Genomic_DNA"/>
</dbReference>
<dbReference type="PDB" id="4WD0">
    <property type="method" value="X-ray"/>
    <property type="resolution" value="1.50 A"/>
    <property type="chains" value="A=1-247"/>
</dbReference>
<dbReference type="PDBsum" id="4WD0"/>
<dbReference type="SMR" id="A1R562"/>
<dbReference type="STRING" id="290340.AAur_1608"/>
<dbReference type="KEGG" id="aau:AAur_1608"/>
<dbReference type="eggNOG" id="COG0106">
    <property type="taxonomic scope" value="Bacteria"/>
</dbReference>
<dbReference type="HOGENOM" id="CLU_048577_1_1_11"/>
<dbReference type="OrthoDB" id="9807749at2"/>
<dbReference type="UniPathway" id="UPA00031">
    <property type="reaction ID" value="UER00009"/>
</dbReference>
<dbReference type="EvolutionaryTrace" id="A1R562"/>
<dbReference type="Proteomes" id="UP000000637">
    <property type="component" value="Chromosome"/>
</dbReference>
<dbReference type="GO" id="GO:0005737">
    <property type="term" value="C:cytoplasm"/>
    <property type="evidence" value="ECO:0007669"/>
    <property type="project" value="UniProtKB-SubCell"/>
</dbReference>
<dbReference type="GO" id="GO:0003949">
    <property type="term" value="F:1-(5-phosphoribosyl)-5-[(5-phosphoribosylamino)methylideneamino]imidazole-4-carboxamide isomerase activity"/>
    <property type="evidence" value="ECO:0007669"/>
    <property type="project" value="UniProtKB-UniRule"/>
</dbReference>
<dbReference type="GO" id="GO:0004640">
    <property type="term" value="F:phosphoribosylanthranilate isomerase activity"/>
    <property type="evidence" value="ECO:0007669"/>
    <property type="project" value="InterPro"/>
</dbReference>
<dbReference type="GO" id="GO:0000105">
    <property type="term" value="P:L-histidine biosynthetic process"/>
    <property type="evidence" value="ECO:0007669"/>
    <property type="project" value="UniProtKB-UniRule"/>
</dbReference>
<dbReference type="GO" id="GO:0000162">
    <property type="term" value="P:L-tryptophan biosynthetic process"/>
    <property type="evidence" value="ECO:0007669"/>
    <property type="project" value="InterPro"/>
</dbReference>
<dbReference type="CDD" id="cd04732">
    <property type="entry name" value="HisA"/>
    <property type="match status" value="1"/>
</dbReference>
<dbReference type="FunFam" id="3.20.20.70:FF:000009">
    <property type="entry name" value="1-(5-phosphoribosyl)-5-[(5-phosphoribosylamino)methylideneamino] imidazole-4-carboxamide isomerase"/>
    <property type="match status" value="1"/>
</dbReference>
<dbReference type="Gene3D" id="3.20.20.70">
    <property type="entry name" value="Aldolase class I"/>
    <property type="match status" value="1"/>
</dbReference>
<dbReference type="HAMAP" id="MF_01014">
    <property type="entry name" value="HisA"/>
    <property type="match status" value="1"/>
</dbReference>
<dbReference type="InterPro" id="IPR013785">
    <property type="entry name" value="Aldolase_TIM"/>
</dbReference>
<dbReference type="InterPro" id="IPR006062">
    <property type="entry name" value="His_biosynth"/>
</dbReference>
<dbReference type="InterPro" id="IPR010188">
    <property type="entry name" value="HisA/PriA_Actinobacteria"/>
</dbReference>
<dbReference type="InterPro" id="IPR044524">
    <property type="entry name" value="Isoase_HisA-like"/>
</dbReference>
<dbReference type="InterPro" id="IPR023016">
    <property type="entry name" value="Isoase_HisA-like_bact"/>
</dbReference>
<dbReference type="InterPro" id="IPR011060">
    <property type="entry name" value="RibuloseP-bd_barrel"/>
</dbReference>
<dbReference type="NCBIfam" id="TIGR01919">
    <property type="entry name" value="hisA-trpF"/>
    <property type="match status" value="1"/>
</dbReference>
<dbReference type="PANTHER" id="PTHR43090">
    <property type="entry name" value="1-(5-PHOSPHORIBOSYL)-5-[(5-PHOSPHORIBOSYLAMINO)METHYLIDENEAMINO] IMIDAZOLE-4-CARBOXAMIDE ISOMERASE"/>
    <property type="match status" value="1"/>
</dbReference>
<dbReference type="PANTHER" id="PTHR43090:SF2">
    <property type="entry name" value="1-(5-PHOSPHORIBOSYL)-5-[(5-PHOSPHORIBOSYLAMINO)METHYLIDENEAMINO] IMIDAZOLE-4-CARBOXAMIDE ISOMERASE"/>
    <property type="match status" value="1"/>
</dbReference>
<dbReference type="Pfam" id="PF00977">
    <property type="entry name" value="His_biosynth"/>
    <property type="match status" value="1"/>
</dbReference>
<dbReference type="SUPFAM" id="SSF51366">
    <property type="entry name" value="Ribulose-phoshate binding barrel"/>
    <property type="match status" value="1"/>
</dbReference>
<evidence type="ECO:0000255" key="1">
    <source>
        <dbReference type="HAMAP-Rule" id="MF_01014"/>
    </source>
</evidence>
<evidence type="ECO:0007829" key="2">
    <source>
        <dbReference type="PDB" id="4WD0"/>
    </source>
</evidence>
<name>HIS4_PAEAT</name>
<feature type="chain" id="PRO_0000290447" description="1-(5-phosphoribosyl)-5-[(5-phosphoribosylamino)methylideneamino] imidazole-4-carboxamide isomerase">
    <location>
        <begin position="1"/>
        <end position="247"/>
    </location>
</feature>
<feature type="active site" description="Proton acceptor" evidence="1">
    <location>
        <position position="16"/>
    </location>
</feature>
<feature type="active site" description="Proton donor" evidence="1">
    <location>
        <position position="135"/>
    </location>
</feature>
<feature type="strand" evidence="2">
    <location>
        <begin position="10"/>
        <end position="18"/>
    </location>
</feature>
<feature type="strand" evidence="2">
    <location>
        <begin position="21"/>
        <end position="25"/>
    </location>
</feature>
<feature type="strand" evidence="2">
    <location>
        <begin position="34"/>
        <end position="37"/>
    </location>
</feature>
<feature type="helix" evidence="2">
    <location>
        <begin position="39"/>
        <end position="48"/>
    </location>
</feature>
<feature type="strand" evidence="2">
    <location>
        <begin position="52"/>
        <end position="58"/>
    </location>
</feature>
<feature type="helix" evidence="2">
    <location>
        <begin position="59"/>
        <end position="62"/>
    </location>
</feature>
<feature type="helix" evidence="2">
    <location>
        <begin position="69"/>
        <end position="78"/>
    </location>
</feature>
<feature type="strand" evidence="2">
    <location>
        <begin position="80"/>
        <end position="88"/>
    </location>
</feature>
<feature type="helix" evidence="2">
    <location>
        <begin position="92"/>
        <end position="100"/>
    </location>
</feature>
<feature type="strand" evidence="2">
    <location>
        <begin position="104"/>
        <end position="108"/>
    </location>
</feature>
<feature type="helix" evidence="2">
    <location>
        <begin position="110"/>
        <end position="114"/>
    </location>
</feature>
<feature type="helix" evidence="2">
    <location>
        <begin position="116"/>
        <end position="126"/>
    </location>
</feature>
<feature type="helix" evidence="2">
    <location>
        <begin position="127"/>
        <end position="129"/>
    </location>
</feature>
<feature type="strand" evidence="2">
    <location>
        <begin position="130"/>
        <end position="137"/>
    </location>
</feature>
<feature type="helix" evidence="2">
    <location>
        <begin position="153"/>
        <end position="163"/>
    </location>
</feature>
<feature type="strand" evidence="2">
    <location>
        <begin position="168"/>
        <end position="172"/>
    </location>
</feature>
<feature type="helix" evidence="2">
    <location>
        <begin position="184"/>
        <end position="194"/>
    </location>
</feature>
<feature type="strand" evidence="2">
    <location>
        <begin position="198"/>
        <end position="202"/>
    </location>
</feature>
<feature type="helix" evidence="2">
    <location>
        <begin position="207"/>
        <end position="214"/>
    </location>
</feature>
<feature type="helix" evidence="2">
    <location>
        <begin position="215"/>
        <end position="219"/>
    </location>
</feature>
<feature type="strand" evidence="2">
    <location>
        <begin position="221"/>
        <end position="226"/>
    </location>
</feature>
<feature type="helix" evidence="2">
    <location>
        <begin position="228"/>
        <end position="231"/>
    </location>
</feature>
<feature type="helix" evidence="2">
    <location>
        <begin position="237"/>
        <end position="244"/>
    </location>
</feature>
<protein>
    <recommendedName>
        <fullName evidence="1">1-(5-phosphoribosyl)-5-[(5-phosphoribosylamino)methylideneamino] imidazole-4-carboxamide isomerase</fullName>
        <ecNumber evidence="1">5.3.1.16</ecNumber>
    </recommendedName>
    <alternativeName>
        <fullName evidence="1">Phosphoribosylformimino-5-aminoimidazole carboxamide ribotide isomerase</fullName>
    </alternativeName>
</protein>
<keyword id="KW-0002">3D-structure</keyword>
<keyword id="KW-0028">Amino-acid biosynthesis</keyword>
<keyword id="KW-0963">Cytoplasm</keyword>
<keyword id="KW-0368">Histidine biosynthesis</keyword>
<keyword id="KW-0413">Isomerase</keyword>
<comment type="catalytic activity">
    <reaction evidence="1">
        <text>1-(5-phospho-beta-D-ribosyl)-5-[(5-phospho-beta-D-ribosylamino)methylideneamino]imidazole-4-carboxamide = 5-[(5-phospho-1-deoxy-D-ribulos-1-ylimino)methylamino]-1-(5-phospho-beta-D-ribosyl)imidazole-4-carboxamide</text>
        <dbReference type="Rhea" id="RHEA:15469"/>
        <dbReference type="ChEBI" id="CHEBI:58435"/>
        <dbReference type="ChEBI" id="CHEBI:58525"/>
        <dbReference type="EC" id="5.3.1.16"/>
    </reaction>
</comment>
<comment type="pathway">
    <text evidence="1">Amino-acid biosynthesis; L-histidine biosynthesis; L-histidine from 5-phospho-alpha-D-ribose 1-diphosphate: step 4/9.</text>
</comment>
<comment type="subcellular location">
    <subcellularLocation>
        <location evidence="1">Cytoplasm</location>
    </subcellularLocation>
</comment>
<comment type="similarity">
    <text evidence="1">Belongs to the HisA/HisF family.</text>
</comment>
<accession>A1R562</accession>
<gene>
    <name evidence="1" type="primary">hisA</name>
    <name type="ordered locus">AAur_1608</name>
</gene>
<proteinExistence type="evidence at protein level"/>
<reference key="1">
    <citation type="journal article" date="2006" name="PLoS Genet.">
        <title>Secrets of soil survival revealed by the genome sequence of Arthrobacter aurescens TC1.</title>
        <authorList>
            <person name="Mongodin E.F."/>
            <person name="Shapir N."/>
            <person name="Daugherty S.C."/>
            <person name="DeBoy R.T."/>
            <person name="Emerson J.B."/>
            <person name="Shvartzbeyn A."/>
            <person name="Radune D."/>
            <person name="Vamathevan J."/>
            <person name="Riggs F."/>
            <person name="Grinberg V."/>
            <person name="Khouri H.M."/>
            <person name="Wackett L.P."/>
            <person name="Nelson K.E."/>
            <person name="Sadowsky M.J."/>
        </authorList>
    </citation>
    <scope>NUCLEOTIDE SEQUENCE [LARGE SCALE GENOMIC DNA]</scope>
    <source>
        <strain>TC1</strain>
    </source>
</reference>
<organism>
    <name type="scientific">Paenarthrobacter aurescens (strain TC1)</name>
    <dbReference type="NCBI Taxonomy" id="290340"/>
    <lineage>
        <taxon>Bacteria</taxon>
        <taxon>Bacillati</taxon>
        <taxon>Actinomycetota</taxon>
        <taxon>Actinomycetes</taxon>
        <taxon>Micrococcales</taxon>
        <taxon>Micrococcaceae</taxon>
        <taxon>Paenarthrobacter</taxon>
    </lineage>
</organism>